<organism>
    <name type="scientific">Homo sapiens</name>
    <name type="common">Human</name>
    <dbReference type="NCBI Taxonomy" id="9606"/>
    <lineage>
        <taxon>Eukaryota</taxon>
        <taxon>Metazoa</taxon>
        <taxon>Chordata</taxon>
        <taxon>Craniata</taxon>
        <taxon>Vertebrata</taxon>
        <taxon>Euteleostomi</taxon>
        <taxon>Mammalia</taxon>
        <taxon>Eutheria</taxon>
        <taxon>Euarchontoglires</taxon>
        <taxon>Primates</taxon>
        <taxon>Haplorrhini</taxon>
        <taxon>Catarrhini</taxon>
        <taxon>Hominidae</taxon>
        <taxon>Homo</taxon>
    </lineage>
</organism>
<name>NGEF_HUMAN</name>
<protein>
    <recommendedName>
        <fullName>Ephexin-1</fullName>
    </recommendedName>
    <alternativeName>
        <fullName>Eph-interacting exchange protein</fullName>
    </alternativeName>
    <alternativeName>
        <fullName>Neuronal guanine nucleotide exchange factor</fullName>
    </alternativeName>
</protein>
<sequence length="710" mass="82496">METRESEDLEKTRRKSASDQWNTDNEPAKVKPELLPEKEETSQADQDIQDKEPHCHIPIKRNSIFNRSIRRKSKAKARDNPERNASCLADSQDNGKSVNEPLTLNIPWSRMPPCRTAMQTDPGAQEMSESSSTPGNGATPEEWPALADSPTTLTEALRMIHPIPADSWRNLIEQIGLLYQEYRDKSTLQEIETRRQQDAEIEDNTNGSPASEDTPEEEEEEEEEEEPASPPERKTLPQICLLSNPHSRFNLWQDLPEIRSSGVLEILQPEEIKLQEAMFELVTSEASYYKSLNLLVSHFMENERIRKILHPSEAHILFSNVLDVLAVSERFLLELEHRMEENIVISDVCDIVYRYAADHFSVYITYVSNQTYQERTYKQLLQEKAAFRELIAQLELDPKCRGLPFSSFLILPFQRITRLKLLVQNILKRVEERSERECTALDAHKELEMVVKACNEGVRKMSRTEQMISIQKKMEFKIKSVPIISHSRWLLKQGELQQMSGPKTSRTLRTKKLFHEIYLFLFNDLLVICRQIPGDKYQVFDSAPRGLLRVEELEDQGQTLANVFILRLLENADDREATYMLKASSQSEMKRWMTSLAPNRRTKFVSFTSRLLDCPQVQCVHPYVAQQPDELTLELADILNILDKTDDGWIFGERLHDQERGWFPSSMTEEILNPKIRSQNLKECFRVHKMDDPQRSQNKDRRKLGSRNRQ</sequence>
<reference key="1">
    <citation type="journal article" date="2004" name="Nat. Genet.">
        <title>Complete sequencing and characterization of 21,243 full-length human cDNAs.</title>
        <authorList>
            <person name="Ota T."/>
            <person name="Suzuki Y."/>
            <person name="Nishikawa T."/>
            <person name="Otsuki T."/>
            <person name="Sugiyama T."/>
            <person name="Irie R."/>
            <person name="Wakamatsu A."/>
            <person name="Hayashi K."/>
            <person name="Sato H."/>
            <person name="Nagai K."/>
            <person name="Kimura K."/>
            <person name="Makita H."/>
            <person name="Sekine M."/>
            <person name="Obayashi M."/>
            <person name="Nishi T."/>
            <person name="Shibahara T."/>
            <person name="Tanaka T."/>
            <person name="Ishii S."/>
            <person name="Yamamoto J."/>
            <person name="Saito K."/>
            <person name="Kawai Y."/>
            <person name="Isono Y."/>
            <person name="Nakamura Y."/>
            <person name="Nagahari K."/>
            <person name="Murakami K."/>
            <person name="Yasuda T."/>
            <person name="Iwayanagi T."/>
            <person name="Wagatsuma M."/>
            <person name="Shiratori A."/>
            <person name="Sudo H."/>
            <person name="Hosoiri T."/>
            <person name="Kaku Y."/>
            <person name="Kodaira H."/>
            <person name="Kondo H."/>
            <person name="Sugawara M."/>
            <person name="Takahashi M."/>
            <person name="Kanda K."/>
            <person name="Yokoi T."/>
            <person name="Furuya T."/>
            <person name="Kikkawa E."/>
            <person name="Omura Y."/>
            <person name="Abe K."/>
            <person name="Kamihara K."/>
            <person name="Katsuta N."/>
            <person name="Sato K."/>
            <person name="Tanikawa M."/>
            <person name="Yamazaki M."/>
            <person name="Ninomiya K."/>
            <person name="Ishibashi T."/>
            <person name="Yamashita H."/>
            <person name="Murakawa K."/>
            <person name="Fujimori K."/>
            <person name="Tanai H."/>
            <person name="Kimata M."/>
            <person name="Watanabe M."/>
            <person name="Hiraoka S."/>
            <person name="Chiba Y."/>
            <person name="Ishida S."/>
            <person name="Ono Y."/>
            <person name="Takiguchi S."/>
            <person name="Watanabe S."/>
            <person name="Yosida M."/>
            <person name="Hotuta T."/>
            <person name="Kusano J."/>
            <person name="Kanehori K."/>
            <person name="Takahashi-Fujii A."/>
            <person name="Hara H."/>
            <person name="Tanase T.-O."/>
            <person name="Nomura Y."/>
            <person name="Togiya S."/>
            <person name="Komai F."/>
            <person name="Hara R."/>
            <person name="Takeuchi K."/>
            <person name="Arita M."/>
            <person name="Imose N."/>
            <person name="Musashino K."/>
            <person name="Yuuki H."/>
            <person name="Oshima A."/>
            <person name="Sasaki N."/>
            <person name="Aotsuka S."/>
            <person name="Yoshikawa Y."/>
            <person name="Matsunawa H."/>
            <person name="Ichihara T."/>
            <person name="Shiohata N."/>
            <person name="Sano S."/>
            <person name="Moriya S."/>
            <person name="Momiyama H."/>
            <person name="Satoh N."/>
            <person name="Takami S."/>
            <person name="Terashima Y."/>
            <person name="Suzuki O."/>
            <person name="Nakagawa S."/>
            <person name="Senoh A."/>
            <person name="Mizoguchi H."/>
            <person name="Goto Y."/>
            <person name="Shimizu F."/>
            <person name="Wakebe H."/>
            <person name="Hishigaki H."/>
            <person name="Watanabe T."/>
            <person name="Sugiyama A."/>
            <person name="Takemoto M."/>
            <person name="Kawakami B."/>
            <person name="Yamazaki M."/>
            <person name="Watanabe K."/>
            <person name="Kumagai A."/>
            <person name="Itakura S."/>
            <person name="Fukuzumi Y."/>
            <person name="Fujimori Y."/>
            <person name="Komiyama M."/>
            <person name="Tashiro H."/>
            <person name="Tanigami A."/>
            <person name="Fujiwara T."/>
            <person name="Ono T."/>
            <person name="Yamada K."/>
            <person name="Fujii Y."/>
            <person name="Ozaki K."/>
            <person name="Hirao M."/>
            <person name="Ohmori Y."/>
            <person name="Kawabata A."/>
            <person name="Hikiji T."/>
            <person name="Kobatake N."/>
            <person name="Inagaki H."/>
            <person name="Ikema Y."/>
            <person name="Okamoto S."/>
            <person name="Okitani R."/>
            <person name="Kawakami T."/>
            <person name="Noguchi S."/>
            <person name="Itoh T."/>
            <person name="Shigeta K."/>
            <person name="Senba T."/>
            <person name="Matsumura K."/>
            <person name="Nakajima Y."/>
            <person name="Mizuno T."/>
            <person name="Morinaga M."/>
            <person name="Sasaki M."/>
            <person name="Togashi T."/>
            <person name="Oyama M."/>
            <person name="Hata H."/>
            <person name="Watanabe M."/>
            <person name="Komatsu T."/>
            <person name="Mizushima-Sugano J."/>
            <person name="Satoh T."/>
            <person name="Shirai Y."/>
            <person name="Takahashi Y."/>
            <person name="Nakagawa K."/>
            <person name="Okumura K."/>
            <person name="Nagase T."/>
            <person name="Nomura N."/>
            <person name="Kikuchi H."/>
            <person name="Masuho Y."/>
            <person name="Yamashita R."/>
            <person name="Nakai K."/>
            <person name="Yada T."/>
            <person name="Nakamura Y."/>
            <person name="Ohara O."/>
            <person name="Isogai T."/>
            <person name="Sugano S."/>
        </authorList>
    </citation>
    <scope>NUCLEOTIDE SEQUENCE [LARGE SCALE MRNA] (ISOFORM 3)</scope>
    <source>
        <tissue>Brain</tissue>
    </source>
</reference>
<reference key="2">
    <citation type="journal article" date="2005" name="Nature">
        <title>Generation and annotation of the DNA sequences of human chromosomes 2 and 4.</title>
        <authorList>
            <person name="Hillier L.W."/>
            <person name="Graves T.A."/>
            <person name="Fulton R.S."/>
            <person name="Fulton L.A."/>
            <person name="Pepin K.H."/>
            <person name="Minx P."/>
            <person name="Wagner-McPherson C."/>
            <person name="Layman D."/>
            <person name="Wylie K."/>
            <person name="Sekhon M."/>
            <person name="Becker M.C."/>
            <person name="Fewell G.A."/>
            <person name="Delehaunty K.D."/>
            <person name="Miner T.L."/>
            <person name="Nash W.E."/>
            <person name="Kremitzki C."/>
            <person name="Oddy L."/>
            <person name="Du H."/>
            <person name="Sun H."/>
            <person name="Bradshaw-Cordum H."/>
            <person name="Ali J."/>
            <person name="Carter J."/>
            <person name="Cordes M."/>
            <person name="Harris A."/>
            <person name="Isak A."/>
            <person name="van Brunt A."/>
            <person name="Nguyen C."/>
            <person name="Du F."/>
            <person name="Courtney L."/>
            <person name="Kalicki J."/>
            <person name="Ozersky P."/>
            <person name="Abbott S."/>
            <person name="Armstrong J."/>
            <person name="Belter E.A."/>
            <person name="Caruso L."/>
            <person name="Cedroni M."/>
            <person name="Cotton M."/>
            <person name="Davidson T."/>
            <person name="Desai A."/>
            <person name="Elliott G."/>
            <person name="Erb T."/>
            <person name="Fronick C."/>
            <person name="Gaige T."/>
            <person name="Haakenson W."/>
            <person name="Haglund K."/>
            <person name="Holmes A."/>
            <person name="Harkins R."/>
            <person name="Kim K."/>
            <person name="Kruchowski S.S."/>
            <person name="Strong C.M."/>
            <person name="Grewal N."/>
            <person name="Goyea E."/>
            <person name="Hou S."/>
            <person name="Levy A."/>
            <person name="Martinka S."/>
            <person name="Mead K."/>
            <person name="McLellan M.D."/>
            <person name="Meyer R."/>
            <person name="Randall-Maher J."/>
            <person name="Tomlinson C."/>
            <person name="Dauphin-Kohlberg S."/>
            <person name="Kozlowicz-Reilly A."/>
            <person name="Shah N."/>
            <person name="Swearengen-Shahid S."/>
            <person name="Snider J."/>
            <person name="Strong J.T."/>
            <person name="Thompson J."/>
            <person name="Yoakum M."/>
            <person name="Leonard S."/>
            <person name="Pearman C."/>
            <person name="Trani L."/>
            <person name="Radionenko M."/>
            <person name="Waligorski J.E."/>
            <person name="Wang C."/>
            <person name="Rock S.M."/>
            <person name="Tin-Wollam A.-M."/>
            <person name="Maupin R."/>
            <person name="Latreille P."/>
            <person name="Wendl M.C."/>
            <person name="Yang S.-P."/>
            <person name="Pohl C."/>
            <person name="Wallis J.W."/>
            <person name="Spieth J."/>
            <person name="Bieri T.A."/>
            <person name="Berkowicz N."/>
            <person name="Nelson J.O."/>
            <person name="Osborne J."/>
            <person name="Ding L."/>
            <person name="Meyer R."/>
            <person name="Sabo A."/>
            <person name="Shotland Y."/>
            <person name="Sinha P."/>
            <person name="Wohldmann P.E."/>
            <person name="Cook L.L."/>
            <person name="Hickenbotham M.T."/>
            <person name="Eldred J."/>
            <person name="Williams D."/>
            <person name="Jones T.A."/>
            <person name="She X."/>
            <person name="Ciccarelli F.D."/>
            <person name="Izaurralde E."/>
            <person name="Taylor J."/>
            <person name="Schmutz J."/>
            <person name="Myers R.M."/>
            <person name="Cox D.R."/>
            <person name="Huang X."/>
            <person name="McPherson J.D."/>
            <person name="Mardis E.R."/>
            <person name="Clifton S.W."/>
            <person name="Warren W.C."/>
            <person name="Chinwalla A.T."/>
            <person name="Eddy S.R."/>
            <person name="Marra M.A."/>
            <person name="Ovcharenko I."/>
            <person name="Furey T.S."/>
            <person name="Miller W."/>
            <person name="Eichler E.E."/>
            <person name="Bork P."/>
            <person name="Suyama M."/>
            <person name="Torrents D."/>
            <person name="Waterston R.H."/>
            <person name="Wilson R.K."/>
        </authorList>
    </citation>
    <scope>NUCLEOTIDE SEQUENCE [LARGE SCALE GENOMIC DNA]</scope>
</reference>
<reference key="3">
    <citation type="journal article" date="2004" name="Genome Res.">
        <title>The status, quality, and expansion of the NIH full-length cDNA project: the Mammalian Gene Collection (MGC).</title>
        <authorList>
            <consortium name="The MGC Project Team"/>
        </authorList>
    </citation>
    <scope>NUCLEOTIDE SEQUENCE [LARGE SCALE MRNA] (ISOFORMS 1 AND 2)</scope>
    <scope>VARIANT THR-111</scope>
    <source>
        <tissue>Leiomyosarcoma</tissue>
    </source>
</reference>
<reference key="4">
    <citation type="journal article" date="2000" name="Genomics">
        <title>Characterization of Ngef, a novel member of the Dbl family of genes expressed predominantly in the caudate nucleus.</title>
        <authorList>
            <person name="Rodrigues N.R."/>
            <person name="Theodosiou A.M."/>
            <person name="Nesbit M.A."/>
            <person name="Campbell L."/>
            <person name="Tandle A.T."/>
            <person name="Saranath D."/>
            <person name="Davies K.E."/>
        </authorList>
    </citation>
    <scope>NUCLEOTIDE SEQUENCE [MRNA] OF 147-583 (ISOFORM 1)</scope>
    <scope>TISSUE SPECIFICITY</scope>
    <source>
        <tissue>Fetal brain</tissue>
    </source>
</reference>
<reference key="5">
    <citation type="journal article" date="2014" name="J. Proteomics">
        <title>An enzyme assisted RP-RPLC approach for in-depth analysis of human liver phosphoproteome.</title>
        <authorList>
            <person name="Bian Y."/>
            <person name="Song C."/>
            <person name="Cheng K."/>
            <person name="Dong M."/>
            <person name="Wang F."/>
            <person name="Huang J."/>
            <person name="Sun D."/>
            <person name="Wang L."/>
            <person name="Ye M."/>
            <person name="Zou H."/>
        </authorList>
    </citation>
    <scope>IDENTIFICATION BY MASS SPECTROMETRY [LARGE SCALE ANALYSIS]</scope>
    <source>
        <tissue>Liver</tissue>
    </source>
</reference>
<proteinExistence type="evidence at protein level"/>
<accession>Q8N5V2</accession>
<accession>B4DMB8</accession>
<accession>B9A045</accession>
<accession>E9PC42</accession>
<accession>Q53QQ4</accession>
<accession>Q53ST7</accession>
<accession>Q6GMQ5</accession>
<accession>Q9NQD6</accession>
<feature type="chain" id="PRO_0000248388" description="Ephexin-1">
    <location>
        <begin position="1"/>
        <end position="710"/>
    </location>
</feature>
<feature type="domain" description="DH" evidence="3">
    <location>
        <begin position="273"/>
        <end position="457"/>
    </location>
</feature>
<feature type="domain" description="PH" evidence="4">
    <location>
        <begin position="489"/>
        <end position="601"/>
    </location>
</feature>
<feature type="domain" description="SH3" evidence="5">
    <location>
        <begin position="612"/>
        <end position="673"/>
    </location>
</feature>
<feature type="region of interest" description="Regulatory region; modulates activity toward RHOA, RAC1 and CDC42" evidence="1">
    <location>
        <begin position="1"/>
        <end position="273"/>
    </location>
</feature>
<feature type="region of interest" description="Disordered" evidence="6">
    <location>
        <begin position="1"/>
        <end position="143"/>
    </location>
</feature>
<feature type="region of interest" description="Disordered" evidence="6">
    <location>
        <begin position="194"/>
        <end position="236"/>
    </location>
</feature>
<feature type="region of interest" description="Disordered" evidence="6">
    <location>
        <begin position="687"/>
        <end position="710"/>
    </location>
</feature>
<feature type="compositionally biased region" description="Basic and acidic residues" evidence="6">
    <location>
        <begin position="1"/>
        <end position="11"/>
    </location>
</feature>
<feature type="compositionally biased region" description="Basic and acidic residues" evidence="6">
    <location>
        <begin position="26"/>
        <end position="41"/>
    </location>
</feature>
<feature type="compositionally biased region" description="Polar residues" evidence="6">
    <location>
        <begin position="89"/>
        <end position="102"/>
    </location>
</feature>
<feature type="compositionally biased region" description="Polar residues" evidence="6">
    <location>
        <begin position="127"/>
        <end position="136"/>
    </location>
</feature>
<feature type="compositionally biased region" description="Acidic residues" evidence="6">
    <location>
        <begin position="213"/>
        <end position="227"/>
    </location>
</feature>
<feature type="compositionally biased region" description="Basic and acidic residues" evidence="6">
    <location>
        <begin position="687"/>
        <end position="699"/>
    </location>
</feature>
<feature type="compositionally biased region" description="Basic residues" evidence="6">
    <location>
        <begin position="700"/>
        <end position="710"/>
    </location>
</feature>
<feature type="modified residue" description="Phosphotyrosine" evidence="2">
    <location>
        <position position="179"/>
    </location>
</feature>
<feature type="splice variant" id="VSP_020259" description="In isoform 2 and isoform 3." evidence="9 10">
    <location>
        <begin position="1"/>
        <end position="92"/>
    </location>
</feature>
<feature type="splice variant" id="VSP_020260" description="In isoform 2 and isoform 3." evidence="9 10">
    <original>DNGKSVNEPLTLNIPWSRMPPCRTAMQTDPGAQEM</original>
    <variation>MELLAAAFSAACAVDHDSSTSESDARDSAAGHLPG</variation>
    <location>
        <begin position="93"/>
        <end position="127"/>
    </location>
</feature>
<feature type="splice variant" id="VSP_020261" description="In isoform 2." evidence="10">
    <location>
        <begin position="331"/>
        <end position="710"/>
    </location>
</feature>
<feature type="sequence variant" id="VAR_027289" description="In dbSNP:rs2271703.">
    <original>R</original>
    <variation>G</variation>
    <location>
        <position position="78"/>
    </location>
</feature>
<feature type="sequence variant" id="VAR_027290" description="In dbSNP:rs4973588." evidence="8">
    <original>M</original>
    <variation>T</variation>
    <location>
        <position position="111"/>
    </location>
</feature>
<feature type="sequence conflict" description="In Ref. 4; CAC00686." evidence="11" ref="4">
    <original>A</original>
    <variation>T</variation>
    <location>
        <position position="147"/>
    </location>
</feature>
<feature type="sequence conflict" description="In Ref. 4; CAC00686." evidence="11" ref="4">
    <original>A</original>
    <variation>R</variation>
    <location>
        <position position="543"/>
    </location>
</feature>
<feature type="sequence conflict" description="In Ref. 4; CAC00686." evidence="11" ref="4">
    <original>T</original>
    <variation>I</variation>
    <location>
        <position position="578"/>
    </location>
</feature>
<feature type="sequence conflict" description="In Ref. 1; BAG59830." evidence="11" ref="1">
    <original>F</original>
    <variation>S</variation>
    <location>
        <position position="604"/>
    </location>
</feature>
<feature type="sequence conflict" description="In Ref. 1; BAG59830." evidence="11" ref="1">
    <original>R</original>
    <variation>M</variation>
    <location>
        <position position="702"/>
    </location>
</feature>
<dbReference type="EMBL" id="AK297390">
    <property type="protein sequence ID" value="BAG59830.1"/>
    <property type="molecule type" value="mRNA"/>
</dbReference>
<dbReference type="EMBL" id="AC016692">
    <property type="protein sequence ID" value="AAX93288.1"/>
    <property type="status" value="ALT_INIT"/>
    <property type="molecule type" value="Genomic_DNA"/>
</dbReference>
<dbReference type="EMBL" id="AC106876">
    <property type="protein sequence ID" value="AAY24359.1"/>
    <property type="molecule type" value="Genomic_DNA"/>
</dbReference>
<dbReference type="EMBL" id="BC031573">
    <property type="protein sequence ID" value="AAH31573.1"/>
    <property type="molecule type" value="mRNA"/>
</dbReference>
<dbReference type="EMBL" id="BC073962">
    <property type="protein sequence ID" value="AAH73962.1"/>
    <property type="status" value="ALT_INIT"/>
    <property type="molecule type" value="mRNA"/>
</dbReference>
<dbReference type="EMBL" id="AJ238899">
    <property type="protein sequence ID" value="CAC00686.1"/>
    <property type="status" value="ALT_FRAME"/>
    <property type="molecule type" value="mRNA"/>
</dbReference>
<dbReference type="CCDS" id="CCDS2500.1">
    <molecule id="Q8N5V2-1"/>
</dbReference>
<dbReference type="CCDS" id="CCDS46544.1">
    <molecule id="Q8N5V2-3"/>
</dbReference>
<dbReference type="RefSeq" id="NP_001107562.1">
    <molecule id="Q8N5V2-3"/>
    <property type="nucleotide sequence ID" value="NM_001114090.2"/>
</dbReference>
<dbReference type="RefSeq" id="NP_062824.2">
    <molecule id="Q8N5V2-1"/>
    <property type="nucleotide sequence ID" value="NM_019850.3"/>
</dbReference>
<dbReference type="RefSeq" id="XP_011509225.1">
    <molecule id="Q8N5V2-1"/>
    <property type="nucleotide sequence ID" value="XM_011510923.4"/>
</dbReference>
<dbReference type="SMR" id="Q8N5V2"/>
<dbReference type="BioGRID" id="117324">
    <property type="interactions" value="75"/>
</dbReference>
<dbReference type="FunCoup" id="Q8N5V2">
    <property type="interactions" value="748"/>
</dbReference>
<dbReference type="IntAct" id="Q8N5V2">
    <property type="interactions" value="45"/>
</dbReference>
<dbReference type="MINT" id="Q8N5V2"/>
<dbReference type="STRING" id="9606.ENSP00000264051"/>
<dbReference type="GlyGen" id="Q8N5V2">
    <property type="glycosylation" value="1 site"/>
</dbReference>
<dbReference type="iPTMnet" id="Q8N5V2"/>
<dbReference type="PhosphoSitePlus" id="Q8N5V2"/>
<dbReference type="BioMuta" id="NGEF"/>
<dbReference type="DMDM" id="114152090"/>
<dbReference type="jPOST" id="Q8N5V2"/>
<dbReference type="MassIVE" id="Q8N5V2"/>
<dbReference type="PaxDb" id="9606-ENSP00000264051"/>
<dbReference type="PeptideAtlas" id="Q8N5V2"/>
<dbReference type="ProteomicsDB" id="19359"/>
<dbReference type="ProteomicsDB" id="72101">
    <molecule id="Q8N5V2-1"/>
</dbReference>
<dbReference type="ProteomicsDB" id="72102">
    <molecule id="Q8N5V2-2"/>
</dbReference>
<dbReference type="Pumba" id="Q8N5V2"/>
<dbReference type="Antibodypedia" id="2119">
    <property type="antibodies" value="132 antibodies from 21 providers"/>
</dbReference>
<dbReference type="DNASU" id="25791"/>
<dbReference type="Ensembl" id="ENST00000264051.8">
    <molecule id="Q8N5V2-1"/>
    <property type="protein sequence ID" value="ENSP00000264051.3"/>
    <property type="gene ID" value="ENSG00000066248.15"/>
</dbReference>
<dbReference type="Ensembl" id="ENST00000373552.8">
    <molecule id="Q8N5V2-3"/>
    <property type="protein sequence ID" value="ENSP00000362653.4"/>
    <property type="gene ID" value="ENSG00000066248.15"/>
</dbReference>
<dbReference type="Ensembl" id="ENST00000409079.1">
    <molecule id="Q8N5V2-2"/>
    <property type="protein sequence ID" value="ENSP00000387033.1"/>
    <property type="gene ID" value="ENSG00000066248.15"/>
</dbReference>
<dbReference type="GeneID" id="25791"/>
<dbReference type="KEGG" id="hsa:25791"/>
<dbReference type="MANE-Select" id="ENST00000264051.8">
    <property type="protein sequence ID" value="ENSP00000264051.3"/>
    <property type="RefSeq nucleotide sequence ID" value="NM_019850.3"/>
    <property type="RefSeq protein sequence ID" value="NP_062824.2"/>
</dbReference>
<dbReference type="UCSC" id="uc002vts.3">
    <molecule id="Q8N5V2-1"/>
    <property type="organism name" value="human"/>
</dbReference>
<dbReference type="AGR" id="HGNC:7807"/>
<dbReference type="CTD" id="25791"/>
<dbReference type="DisGeNET" id="25791"/>
<dbReference type="GeneCards" id="NGEF"/>
<dbReference type="HGNC" id="HGNC:7807">
    <property type="gene designation" value="NGEF"/>
</dbReference>
<dbReference type="HPA" id="ENSG00000066248">
    <property type="expression patterns" value="Tissue enhanced (adrenal gland, brain)"/>
</dbReference>
<dbReference type="MIM" id="605991">
    <property type="type" value="gene"/>
</dbReference>
<dbReference type="neXtProt" id="NX_Q8N5V2"/>
<dbReference type="OpenTargets" id="ENSG00000066248"/>
<dbReference type="PharmGKB" id="PA31613"/>
<dbReference type="VEuPathDB" id="HostDB:ENSG00000066248"/>
<dbReference type="eggNOG" id="KOG3523">
    <property type="taxonomic scope" value="Eukaryota"/>
</dbReference>
<dbReference type="GeneTree" id="ENSGT01030000234571"/>
<dbReference type="HOGENOM" id="CLU_012820_5_1_1"/>
<dbReference type="InParanoid" id="Q8N5V2"/>
<dbReference type="OMA" id="SQTICHS"/>
<dbReference type="OrthoDB" id="27593at2759"/>
<dbReference type="PAN-GO" id="Q8N5V2">
    <property type="GO annotations" value="1 GO annotation based on evolutionary models"/>
</dbReference>
<dbReference type="PhylomeDB" id="Q8N5V2"/>
<dbReference type="TreeFam" id="TF316357"/>
<dbReference type="PathwayCommons" id="Q8N5V2"/>
<dbReference type="Reactome" id="R-HSA-193648">
    <property type="pathway name" value="NRAGE signals death through JNK"/>
</dbReference>
<dbReference type="Reactome" id="R-HSA-3928663">
    <property type="pathway name" value="EPHA-mediated growth cone collapse"/>
</dbReference>
<dbReference type="Reactome" id="R-HSA-416482">
    <property type="pathway name" value="G alpha (12/13) signalling events"/>
</dbReference>
<dbReference type="Reactome" id="R-HSA-8980692">
    <property type="pathway name" value="RHOA GTPase cycle"/>
</dbReference>
<dbReference type="Reactome" id="R-HSA-9013148">
    <property type="pathway name" value="CDC42 GTPase cycle"/>
</dbReference>
<dbReference type="Reactome" id="R-HSA-9013149">
    <property type="pathway name" value="RAC1 GTPase cycle"/>
</dbReference>
<dbReference type="SignaLink" id="Q8N5V2"/>
<dbReference type="SIGNOR" id="Q8N5V2"/>
<dbReference type="BioGRID-ORCS" id="25791">
    <property type="hits" value="9 hits in 1144 CRISPR screens"/>
</dbReference>
<dbReference type="ChiTaRS" id="NGEF">
    <property type="organism name" value="human"/>
</dbReference>
<dbReference type="GenomeRNAi" id="25791"/>
<dbReference type="Pharos" id="Q8N5V2">
    <property type="development level" value="Tbio"/>
</dbReference>
<dbReference type="PRO" id="PR:Q8N5V2"/>
<dbReference type="Proteomes" id="UP000005640">
    <property type="component" value="Chromosome 2"/>
</dbReference>
<dbReference type="RNAct" id="Q8N5V2">
    <property type="molecule type" value="protein"/>
</dbReference>
<dbReference type="Bgee" id="ENSG00000066248">
    <property type="expression patterns" value="Expressed in prefrontal cortex and 158 other cell types or tissues"/>
</dbReference>
<dbReference type="ExpressionAtlas" id="Q8N5V2">
    <property type="expression patterns" value="baseline and differential"/>
</dbReference>
<dbReference type="GO" id="GO:0005829">
    <property type="term" value="C:cytosol"/>
    <property type="evidence" value="ECO:0000304"/>
    <property type="project" value="Reactome"/>
</dbReference>
<dbReference type="GO" id="GO:0098978">
    <property type="term" value="C:glutamatergic synapse"/>
    <property type="evidence" value="ECO:0007669"/>
    <property type="project" value="Ensembl"/>
</dbReference>
<dbReference type="GO" id="GO:0030426">
    <property type="term" value="C:growth cone"/>
    <property type="evidence" value="ECO:0007669"/>
    <property type="project" value="UniProtKB-SubCell"/>
</dbReference>
<dbReference type="GO" id="GO:0016020">
    <property type="term" value="C:membrane"/>
    <property type="evidence" value="ECO:0007669"/>
    <property type="project" value="UniProtKB-SubCell"/>
</dbReference>
<dbReference type="GO" id="GO:0046875">
    <property type="term" value="F:ephrin receptor binding"/>
    <property type="evidence" value="ECO:0007669"/>
    <property type="project" value="Ensembl"/>
</dbReference>
<dbReference type="GO" id="GO:0005085">
    <property type="term" value="F:guanyl-nucleotide exchange factor activity"/>
    <property type="evidence" value="ECO:0000269"/>
    <property type="project" value="Reactome"/>
</dbReference>
<dbReference type="GO" id="GO:0030154">
    <property type="term" value="P:cell differentiation"/>
    <property type="evidence" value="ECO:0007669"/>
    <property type="project" value="UniProtKB-KW"/>
</dbReference>
<dbReference type="GO" id="GO:0048013">
    <property type="term" value="P:ephrin receptor signaling pathway"/>
    <property type="evidence" value="ECO:0000250"/>
    <property type="project" value="UniProtKB"/>
</dbReference>
<dbReference type="GO" id="GO:0061002">
    <property type="term" value="P:negative regulation of dendritic spine morphogenesis"/>
    <property type="evidence" value="ECO:0000250"/>
    <property type="project" value="UniProtKB"/>
</dbReference>
<dbReference type="GO" id="GO:0007399">
    <property type="term" value="P:nervous system development"/>
    <property type="evidence" value="ECO:0007669"/>
    <property type="project" value="UniProtKB-KW"/>
</dbReference>
<dbReference type="GO" id="GO:0032956">
    <property type="term" value="P:regulation of actin cytoskeleton organization"/>
    <property type="evidence" value="ECO:0000318"/>
    <property type="project" value="GO_Central"/>
</dbReference>
<dbReference type="GO" id="GO:0043087">
    <property type="term" value="P:regulation of GTPase activity"/>
    <property type="evidence" value="ECO:0000250"/>
    <property type="project" value="UniProtKB"/>
</dbReference>
<dbReference type="GO" id="GO:0051056">
    <property type="term" value="P:regulation of small GTPase mediated signal transduction"/>
    <property type="evidence" value="ECO:0000304"/>
    <property type="project" value="Reactome"/>
</dbReference>
<dbReference type="GO" id="GO:1905806">
    <property type="term" value="P:regulation of synapse pruning"/>
    <property type="evidence" value="ECO:0007669"/>
    <property type="project" value="Ensembl"/>
</dbReference>
<dbReference type="CDD" id="cd01221">
    <property type="entry name" value="PH_ephexin"/>
    <property type="match status" value="1"/>
</dbReference>
<dbReference type="CDD" id="cd00160">
    <property type="entry name" value="RhoGEF"/>
    <property type="match status" value="1"/>
</dbReference>
<dbReference type="CDD" id="cd11939">
    <property type="entry name" value="SH3_ephexin1"/>
    <property type="match status" value="1"/>
</dbReference>
<dbReference type="FunFam" id="2.30.30.40:FF:000123">
    <property type="entry name" value="Ephexin-1 isoform X1"/>
    <property type="match status" value="1"/>
</dbReference>
<dbReference type="FunFam" id="2.30.29.30:FF:000127">
    <property type="entry name" value="Neuronal guanine nucleotide exchange factor"/>
    <property type="match status" value="1"/>
</dbReference>
<dbReference type="FunFam" id="1.20.900.10:FF:000007">
    <property type="entry name" value="rho guanine nucleotide exchange factor 19"/>
    <property type="match status" value="1"/>
</dbReference>
<dbReference type="Gene3D" id="1.20.900.10">
    <property type="entry name" value="Dbl homology (DH) domain"/>
    <property type="match status" value="1"/>
</dbReference>
<dbReference type="Gene3D" id="2.30.29.30">
    <property type="entry name" value="Pleckstrin-homology domain (PH domain)/Phosphotyrosine-binding domain (PTB)"/>
    <property type="match status" value="1"/>
</dbReference>
<dbReference type="Gene3D" id="2.30.30.40">
    <property type="entry name" value="SH3 Domains"/>
    <property type="match status" value="1"/>
</dbReference>
<dbReference type="InterPro" id="IPR035899">
    <property type="entry name" value="DBL_dom_sf"/>
</dbReference>
<dbReference type="InterPro" id="IPR000219">
    <property type="entry name" value="DH_dom"/>
</dbReference>
<dbReference type="InterPro" id="IPR035635">
    <property type="entry name" value="Ephexin-1_SH3"/>
</dbReference>
<dbReference type="InterPro" id="IPR047271">
    <property type="entry name" value="Ephexin-like"/>
</dbReference>
<dbReference type="InterPro" id="IPR011993">
    <property type="entry name" value="PH-like_dom_sf"/>
</dbReference>
<dbReference type="InterPro" id="IPR001849">
    <property type="entry name" value="PH_domain"/>
</dbReference>
<dbReference type="InterPro" id="IPR047270">
    <property type="entry name" value="PH_ephexin"/>
</dbReference>
<dbReference type="InterPro" id="IPR036028">
    <property type="entry name" value="SH3-like_dom_sf"/>
</dbReference>
<dbReference type="InterPro" id="IPR001452">
    <property type="entry name" value="SH3_domain"/>
</dbReference>
<dbReference type="InterPro" id="IPR055251">
    <property type="entry name" value="SOS1_NGEF_PH"/>
</dbReference>
<dbReference type="PANTHER" id="PTHR12845:SF8">
    <property type="entry name" value="EPHEXIN-1"/>
    <property type="match status" value="1"/>
</dbReference>
<dbReference type="PANTHER" id="PTHR12845">
    <property type="entry name" value="GUANINE NUCLEOTIDE EXCHANGE FACTOR"/>
    <property type="match status" value="1"/>
</dbReference>
<dbReference type="Pfam" id="PF00621">
    <property type="entry name" value="RhoGEF"/>
    <property type="match status" value="1"/>
</dbReference>
<dbReference type="Pfam" id="PF00018">
    <property type="entry name" value="SH3_1"/>
    <property type="match status" value="1"/>
</dbReference>
<dbReference type="Pfam" id="PF22697">
    <property type="entry name" value="SOS1_NGEF_PH"/>
    <property type="match status" value="1"/>
</dbReference>
<dbReference type="SMART" id="SM00233">
    <property type="entry name" value="PH"/>
    <property type="match status" value="1"/>
</dbReference>
<dbReference type="SMART" id="SM00325">
    <property type="entry name" value="RhoGEF"/>
    <property type="match status" value="1"/>
</dbReference>
<dbReference type="SMART" id="SM00326">
    <property type="entry name" value="SH3"/>
    <property type="match status" value="1"/>
</dbReference>
<dbReference type="SUPFAM" id="SSF48065">
    <property type="entry name" value="DBL homology domain (DH-domain)"/>
    <property type="match status" value="1"/>
</dbReference>
<dbReference type="SUPFAM" id="SSF50729">
    <property type="entry name" value="PH domain-like"/>
    <property type="match status" value="1"/>
</dbReference>
<dbReference type="SUPFAM" id="SSF50044">
    <property type="entry name" value="SH3-domain"/>
    <property type="match status" value="1"/>
</dbReference>
<dbReference type="PROSITE" id="PS50010">
    <property type="entry name" value="DH_2"/>
    <property type="match status" value="1"/>
</dbReference>
<dbReference type="PROSITE" id="PS50003">
    <property type="entry name" value="PH_DOMAIN"/>
    <property type="match status" value="1"/>
</dbReference>
<dbReference type="PROSITE" id="PS50002">
    <property type="entry name" value="SH3"/>
    <property type="match status" value="1"/>
</dbReference>
<keyword id="KW-0025">Alternative splicing</keyword>
<keyword id="KW-0966">Cell projection</keyword>
<keyword id="KW-0963">Cytoplasm</keyword>
<keyword id="KW-0217">Developmental protein</keyword>
<keyword id="KW-0221">Differentiation</keyword>
<keyword id="KW-0344">Guanine-nucleotide releasing factor</keyword>
<keyword id="KW-0472">Membrane</keyword>
<keyword id="KW-0524">Neurogenesis</keyword>
<keyword id="KW-0597">Phosphoprotein</keyword>
<keyword id="KW-1267">Proteomics identification</keyword>
<keyword id="KW-1185">Reference proteome</keyword>
<keyword id="KW-0728">SH3 domain</keyword>
<evidence type="ECO:0000250" key="1"/>
<evidence type="ECO:0000250" key="2">
    <source>
        <dbReference type="UniProtKB" id="Q5BKC9"/>
    </source>
</evidence>
<evidence type="ECO:0000255" key="3">
    <source>
        <dbReference type="PROSITE-ProRule" id="PRU00062"/>
    </source>
</evidence>
<evidence type="ECO:0000255" key="4">
    <source>
        <dbReference type="PROSITE-ProRule" id="PRU00145"/>
    </source>
</evidence>
<evidence type="ECO:0000255" key="5">
    <source>
        <dbReference type="PROSITE-ProRule" id="PRU00192"/>
    </source>
</evidence>
<evidence type="ECO:0000256" key="6">
    <source>
        <dbReference type="SAM" id="MobiDB-lite"/>
    </source>
</evidence>
<evidence type="ECO:0000269" key="7">
    <source>
    </source>
</evidence>
<evidence type="ECO:0000269" key="8">
    <source>
    </source>
</evidence>
<evidence type="ECO:0000303" key="9">
    <source>
    </source>
</evidence>
<evidence type="ECO:0000303" key="10">
    <source>
    </source>
</evidence>
<evidence type="ECO:0000305" key="11"/>
<gene>
    <name type="primary">NGEF</name>
</gene>
<comment type="function">
    <text evidence="1">Acts as a guanine nucleotide exchange factor (GEF) which differentially activates the GTPases RHOA, RAC1 and CDC42. Plays a role in axon guidance regulating ephrin-induced growth cone collapse and dendritic spine morphogenesis. Upon activation by ephrin through EPHA4, the GEF activity switches toward RHOA resulting in its activation. Activated RHOA promotes cone retraction at the expense of RAC1- and CDC42-stimulated growth cone extension (By similarity).</text>
</comment>
<comment type="subunit">
    <text evidence="1">Interacts with CDK5R1 and EPHA4; activated by EPHA4 through the CDK5 kinase.</text>
</comment>
<comment type="interaction">
    <interactant intactId="EBI-718372">
        <id>Q8N5V2</id>
    </interactant>
    <interactant intactId="EBI-348399">
        <id>P22607</id>
        <label>FGFR3</label>
    </interactant>
    <organismsDiffer>false</organismsDiffer>
    <experiments>3</experiments>
</comment>
<comment type="interaction">
    <interactant intactId="EBI-718372">
        <id>Q8N5V2</id>
    </interactant>
    <interactant intactId="EBI-747754">
        <id>P28799</id>
        <label>GRN</label>
    </interactant>
    <organismsDiffer>false</organismsDiffer>
    <experiments>3</experiments>
</comment>
<comment type="interaction">
    <interactant intactId="EBI-718372">
        <id>Q8N5V2</id>
    </interactant>
    <interactant intactId="EBI-351506">
        <id>P06396</id>
        <label>GSN</label>
    </interactant>
    <organismsDiffer>false</organismsDiffer>
    <experiments>3</experiments>
</comment>
<comment type="interaction">
    <interactant intactId="EBI-718372">
        <id>Q8N5V2</id>
    </interactant>
    <interactant intactId="EBI-350145">
        <id>P01112</id>
        <label>HRAS</label>
    </interactant>
    <organismsDiffer>false</organismsDiffer>
    <experiments>3</experiments>
</comment>
<comment type="interaction">
    <interactant intactId="EBI-718372">
        <id>Q8N5V2</id>
    </interactant>
    <interactant intactId="EBI-352682">
        <id>P04792</id>
        <label>HSPB1</label>
    </interactant>
    <organismsDiffer>false</organismsDiffer>
    <experiments>3</experiments>
</comment>
<comment type="interaction">
    <interactant intactId="EBI-718372">
        <id>Q8N5V2</id>
    </interactant>
    <interactant intactId="EBI-466029">
        <id>P42858</id>
        <label>HTT</label>
    </interactant>
    <organismsDiffer>false</organismsDiffer>
    <experiments>3</experiments>
</comment>
<comment type="interaction">
    <interactant intactId="EBI-718372">
        <id>Q8N5V2</id>
    </interactant>
    <interactant intactId="EBI-10975473">
        <id>O60333-2</id>
        <label>KIF1B</label>
    </interactant>
    <organismsDiffer>false</organismsDiffer>
    <experiments>3</experiments>
</comment>
<comment type="interaction">
    <interactant intactId="EBI-718372">
        <id>Q8N5V2</id>
    </interactant>
    <interactant intactId="EBI-396669">
        <id>Q9Y3C5</id>
        <label>RNF11</label>
    </interactant>
    <organismsDiffer>false</organismsDiffer>
    <experiments>3</experiments>
</comment>
<comment type="interaction">
    <interactant intactId="EBI-718372">
        <id>Q8N5V2</id>
    </interactant>
    <interactant intactId="EBI-720609">
        <id>O76024</id>
        <label>WFS1</label>
    </interactant>
    <organismsDiffer>false</organismsDiffer>
    <experiments>3</experiments>
</comment>
<comment type="interaction">
    <interactant intactId="EBI-718372">
        <id>Q8N5V2</id>
    </interactant>
    <interactant intactId="EBI-25900580">
        <id>Q9Y649</id>
    </interactant>
    <organismsDiffer>false</organismsDiffer>
    <experiments>3</experiments>
</comment>
<comment type="subcellular location">
    <subcellularLocation>
        <location evidence="1">Cytoplasm</location>
    </subcellularLocation>
    <subcellularLocation>
        <location evidence="1">Membrane</location>
    </subcellularLocation>
    <subcellularLocation>
        <location evidence="1">Cell projection</location>
        <location evidence="1">Growth cone</location>
    </subcellularLocation>
    <text evidence="1">Associated with membranes. Localizes to axonal growth cones (By similarity).</text>
</comment>
<comment type="alternative products">
    <event type="alternative splicing"/>
    <isoform>
        <id>Q8N5V2-1</id>
        <name>1</name>
        <sequence type="displayed"/>
    </isoform>
    <isoform>
        <id>Q8N5V2-2</id>
        <name>2</name>
        <sequence type="described" ref="VSP_020259 VSP_020260 VSP_020261"/>
    </isoform>
    <isoform>
        <id>Q8N5V2-3</id>
        <name>3</name>
        <sequence type="described" ref="VSP_020259 VSP_020260"/>
    </isoform>
</comment>
<comment type="tissue specificity">
    <text evidence="7">Highly expressed in brain specifically in caudate nucleus and to a lower extent in amygdala and hippocampus. Also detected in lung.</text>
</comment>
<comment type="domain">
    <text evidence="1">The DH domain and the PH domain are both required to mediate interaction with EPHA4.</text>
</comment>
<comment type="PTM">
    <text evidence="1">Src-dependent phosphorylation at Tyr-179 upon EPHA4 activation increases the guanine exchange factor activity toward RHOA. Phosphorylation by CDK5 upon EPHA4 activation by EFNA1 may regulate dendritic spine morphogenesis (By similarity).</text>
</comment>
<comment type="sequence caution" evidence="11">
    <conflict type="erroneous initiation">
        <sequence resource="EMBL-CDS" id="AAH73962"/>
    </conflict>
</comment>
<comment type="sequence caution" evidence="11">
    <conflict type="erroneous initiation">
        <sequence resource="EMBL-CDS" id="AAX93288"/>
    </conflict>
</comment>
<comment type="sequence caution" evidence="11">
    <conflict type="frameshift">
        <sequence resource="EMBL-CDS" id="CAC00686"/>
    </conflict>
</comment>